<dbReference type="EMBL" id="EU163860">
    <property type="protein sequence ID" value="ABY26669.1"/>
    <property type="molecule type" value="mRNA"/>
</dbReference>
<dbReference type="GO" id="GO:0005576">
    <property type="term" value="C:extracellular region"/>
    <property type="evidence" value="ECO:0007669"/>
    <property type="project" value="UniProtKB-SubCell"/>
</dbReference>
<dbReference type="GO" id="GO:0099106">
    <property type="term" value="F:ion channel regulator activity"/>
    <property type="evidence" value="ECO:0007669"/>
    <property type="project" value="UniProtKB-KW"/>
</dbReference>
<dbReference type="GO" id="GO:0090729">
    <property type="term" value="F:toxin activity"/>
    <property type="evidence" value="ECO:0007669"/>
    <property type="project" value="UniProtKB-KW"/>
</dbReference>
<reference key="1">
    <citation type="journal article" date="2010" name="BMC Genomics">
        <title>Comparative venom gland transcriptome analysis of the scorpion Lychas mucronatus reveals intraspecific toxic gene diversity and new venomous components.</title>
        <authorList>
            <person name="Zhao R."/>
            <person name="Ma Y."/>
            <person name="He Y."/>
            <person name="Di Z."/>
            <person name="Wu Y.-L."/>
            <person name="Cao Z.-J."/>
            <person name="Li W.-X."/>
        </authorList>
    </citation>
    <scope>NUCLEOTIDE SEQUENCE [MRNA]</scope>
    <source>
        <strain>Hainan</strain>
        <tissue>Venom gland</tissue>
    </source>
</reference>
<protein>
    <recommendedName>
        <fullName>Putative neurotoxin-I</fullName>
    </recommendedName>
</protein>
<proteinExistence type="evidence at transcript level"/>
<organism>
    <name type="scientific">Lychas mucronatus</name>
    <name type="common">Chinese swimming scorpion</name>
    <dbReference type="NCBI Taxonomy" id="172552"/>
    <lineage>
        <taxon>Eukaryota</taxon>
        <taxon>Metazoa</taxon>
        <taxon>Ecdysozoa</taxon>
        <taxon>Arthropoda</taxon>
        <taxon>Chelicerata</taxon>
        <taxon>Arachnida</taxon>
        <taxon>Scorpiones</taxon>
        <taxon>Buthida</taxon>
        <taxon>Buthoidea</taxon>
        <taxon>Buthidae</taxon>
        <taxon>Lychas</taxon>
    </lineage>
</organism>
<evidence type="ECO:0000250" key="1"/>
<feature type="chain" id="PRO_0000403841" description="Putative neurotoxin-I">
    <location>
        <begin position="1" status="less than"/>
        <end position="54"/>
    </location>
</feature>
<feature type="disulfide bond" evidence="1">
    <location>
        <begin position="20"/>
        <end position="42"/>
    </location>
</feature>
<feature type="disulfide bond" evidence="1">
    <location>
        <begin position="28"/>
        <end position="51"/>
    </location>
</feature>
<feature type="disulfide bond" evidence="1">
    <location>
        <begin position="32"/>
        <end position="53"/>
    </location>
</feature>
<feature type="non-terminal residue">
    <location>
        <position position="1"/>
    </location>
</feature>
<comment type="subcellular location">
    <subcellularLocation>
        <location evidence="1">Secreted</location>
    </subcellularLocation>
</comment>
<comment type="tissue specificity">
    <text>Expressed by the venom gland.</text>
</comment>
<name>KTXI_LYCMC</name>
<keyword id="KW-1015">Disulfide bond</keyword>
<keyword id="KW-0872">Ion channel impairing toxin</keyword>
<keyword id="KW-0528">Neurotoxin</keyword>
<keyword id="KW-0964">Secreted</keyword>
<keyword id="KW-0800">Toxin</keyword>
<sequence length="54" mass="6237">CIILLLTIFEINADVKVTDCSKDEYSWCVEKCTKVRSKVRQCKVINDSVKCQCH</sequence>
<accession>D9U2B3</accession>